<proteinExistence type="inferred from homology"/>
<dbReference type="EMBL" id="AE006468">
    <property type="protein sequence ID" value="AAL22111.1"/>
    <property type="molecule type" value="Genomic_DNA"/>
</dbReference>
<dbReference type="RefSeq" id="WP_000463090.1">
    <property type="nucleotide sequence ID" value="NC_003197.2"/>
</dbReference>
<dbReference type="SMR" id="Q8ZLW5"/>
<dbReference type="STRING" id="99287.STM3238"/>
<dbReference type="PaxDb" id="99287-STM3238"/>
<dbReference type="DNASU" id="1254761"/>
<dbReference type="KEGG" id="stm:STM3238"/>
<dbReference type="PATRIC" id="fig|99287.12.peg.3434"/>
<dbReference type="HOGENOM" id="CLU_051840_0_0_6"/>
<dbReference type="OMA" id="MIPVMSN"/>
<dbReference type="PhylomeDB" id="Q8ZLW5"/>
<dbReference type="BioCyc" id="SENT99287:STM3238-MONOMER"/>
<dbReference type="Proteomes" id="UP000001014">
    <property type="component" value="Chromosome"/>
</dbReference>
<dbReference type="GO" id="GO:0080146">
    <property type="term" value="F:L-cysteine desulfhydrase activity"/>
    <property type="evidence" value="ECO:0000318"/>
    <property type="project" value="GO_Central"/>
</dbReference>
<dbReference type="GO" id="GO:0019450">
    <property type="term" value="P:L-cysteine catabolic process to pyruvate"/>
    <property type="evidence" value="ECO:0000318"/>
    <property type="project" value="GO_Central"/>
</dbReference>
<dbReference type="HAMAP" id="MF_01845">
    <property type="entry name" value="UPF0597"/>
    <property type="match status" value="1"/>
</dbReference>
<dbReference type="InterPro" id="IPR005130">
    <property type="entry name" value="Ser_deHydtase-like_asu"/>
</dbReference>
<dbReference type="InterPro" id="IPR021144">
    <property type="entry name" value="UPF0597"/>
</dbReference>
<dbReference type="PANTHER" id="PTHR30501">
    <property type="entry name" value="UPF0597 PROTEIN YHAM"/>
    <property type="match status" value="1"/>
</dbReference>
<dbReference type="PANTHER" id="PTHR30501:SF2">
    <property type="entry name" value="UPF0597 PROTEIN YHAM"/>
    <property type="match status" value="1"/>
</dbReference>
<dbReference type="Pfam" id="PF03313">
    <property type="entry name" value="SDH_alpha"/>
    <property type="match status" value="1"/>
</dbReference>
<dbReference type="PIRSF" id="PIRSF006054">
    <property type="entry name" value="UCP006054"/>
    <property type="match status" value="1"/>
</dbReference>
<feature type="chain" id="PRO_0000339843" description="UPF0597 protein YhaM">
    <location>
        <begin position="1"/>
        <end position="436"/>
    </location>
</feature>
<organism>
    <name type="scientific">Salmonella typhimurium (strain LT2 / SGSC1412 / ATCC 700720)</name>
    <dbReference type="NCBI Taxonomy" id="99287"/>
    <lineage>
        <taxon>Bacteria</taxon>
        <taxon>Pseudomonadati</taxon>
        <taxon>Pseudomonadota</taxon>
        <taxon>Gammaproteobacteria</taxon>
        <taxon>Enterobacterales</taxon>
        <taxon>Enterobacteriaceae</taxon>
        <taxon>Salmonella</taxon>
    </lineage>
</organism>
<protein>
    <recommendedName>
        <fullName evidence="1">UPF0597 protein YhaM</fullName>
    </recommendedName>
</protein>
<sequence length="436" mass="45154">MFESKINPLWQSFILAVQEEVKPALGCTEPISLALAAAAAAAELNGTVERIDAWVSPNLMKNGMGVTVPGTGMVGLPIAAALGALGGDAKAGLEVLKDASAKAVADAKAMLAAGHVAVMLQEPCNDILFSRAKVYSGDSWACVTIVGDHTNIVRIETDKGVVFTQADNAQEEEKTSPLGVLSHTSLEEILAFVNAVPFDAIRFILDAARLNGALSQEGLRGSWGLHIGSTLAKQCDRGLLAKDLSTAILIRTSAASDARMGGATLPAMSNSGSGNQGITATVPVMVVAEHVGADDERLARALMLSHLSAIYIHHQLPRLSALCAATTAAMGAAAGMAWLIDGRYDTIAMAISSMIGDVSGMICDGASNSCAMKVSTSASAAWKAVLMALDDTAVTGNEGIVAHNVEQSISNLCSLACRSMQQTDKQIIEIMASKAH</sequence>
<gene>
    <name evidence="1" type="primary">yhaM</name>
    <name type="ordered locus">STM3238</name>
</gene>
<name>YHAM_SALTY</name>
<comment type="similarity">
    <text evidence="1">Belongs to the UPF0597 family.</text>
</comment>
<evidence type="ECO:0000255" key="1">
    <source>
        <dbReference type="HAMAP-Rule" id="MF_01845"/>
    </source>
</evidence>
<reference key="1">
    <citation type="journal article" date="2001" name="Nature">
        <title>Complete genome sequence of Salmonella enterica serovar Typhimurium LT2.</title>
        <authorList>
            <person name="McClelland M."/>
            <person name="Sanderson K.E."/>
            <person name="Spieth J."/>
            <person name="Clifton S.W."/>
            <person name="Latreille P."/>
            <person name="Courtney L."/>
            <person name="Porwollik S."/>
            <person name="Ali J."/>
            <person name="Dante M."/>
            <person name="Du F."/>
            <person name="Hou S."/>
            <person name="Layman D."/>
            <person name="Leonard S."/>
            <person name="Nguyen C."/>
            <person name="Scott K."/>
            <person name="Holmes A."/>
            <person name="Grewal N."/>
            <person name="Mulvaney E."/>
            <person name="Ryan E."/>
            <person name="Sun H."/>
            <person name="Florea L."/>
            <person name="Miller W."/>
            <person name="Stoneking T."/>
            <person name="Nhan M."/>
            <person name="Waterston R."/>
            <person name="Wilson R.K."/>
        </authorList>
    </citation>
    <scope>NUCLEOTIDE SEQUENCE [LARGE SCALE GENOMIC DNA]</scope>
    <source>
        <strain>LT2 / SGSC1412 / ATCC 700720</strain>
    </source>
</reference>
<accession>Q8ZLW5</accession>
<keyword id="KW-1185">Reference proteome</keyword>